<proteinExistence type="inferred from homology"/>
<protein>
    <recommendedName>
        <fullName evidence="1">ATP-dependent zinc metalloprotease FtsH</fullName>
        <ecNumber evidence="1">3.4.24.-</ecNumber>
    </recommendedName>
</protein>
<comment type="function">
    <text evidence="1">Acts as a processive, ATP-dependent zinc metallopeptidase for both cytoplasmic and membrane proteins. Plays a role in the quality control of integral membrane proteins.</text>
</comment>
<comment type="cofactor">
    <cofactor evidence="1">
        <name>Zn(2+)</name>
        <dbReference type="ChEBI" id="CHEBI:29105"/>
    </cofactor>
    <text evidence="1">Binds 1 zinc ion per subunit.</text>
</comment>
<comment type="subunit">
    <text evidence="1">Homohexamer.</text>
</comment>
<comment type="subcellular location">
    <subcellularLocation>
        <location evidence="1">Cell inner membrane</location>
        <topology evidence="1">Multi-pass membrane protein</topology>
        <orientation evidence="1">Cytoplasmic side</orientation>
    </subcellularLocation>
</comment>
<comment type="similarity">
    <text evidence="1">In the central section; belongs to the AAA ATPase family.</text>
</comment>
<comment type="similarity">
    <text evidence="1">In the C-terminal section; belongs to the peptidase M41 family.</text>
</comment>
<evidence type="ECO:0000255" key="1">
    <source>
        <dbReference type="HAMAP-Rule" id="MF_01458"/>
    </source>
</evidence>
<evidence type="ECO:0000256" key="2">
    <source>
        <dbReference type="SAM" id="MobiDB-lite"/>
    </source>
</evidence>
<accession>D0MGU8</accession>
<organism>
    <name type="scientific">Rhodothermus marinus (strain ATCC 43812 / DSM 4252 / R-10)</name>
    <name type="common">Rhodothermus obamensis</name>
    <dbReference type="NCBI Taxonomy" id="518766"/>
    <lineage>
        <taxon>Bacteria</taxon>
        <taxon>Pseudomonadati</taxon>
        <taxon>Rhodothermota</taxon>
        <taxon>Rhodothermia</taxon>
        <taxon>Rhodothermales</taxon>
        <taxon>Rhodothermaceae</taxon>
        <taxon>Rhodothermus</taxon>
    </lineage>
</organism>
<gene>
    <name evidence="1" type="primary">ftsH</name>
    <name type="ordered locus">Rmar_0836</name>
</gene>
<reference key="1">
    <citation type="journal article" date="2009" name="Stand. Genomic Sci.">
        <title>Complete genome sequence of Rhodothermus marinus type strain (R-10).</title>
        <authorList>
            <person name="Nolan M."/>
            <person name="Tindall B.J."/>
            <person name="Pomrenke H."/>
            <person name="Lapidus A."/>
            <person name="Copeland A."/>
            <person name="Glavina Del Rio T."/>
            <person name="Lucas S."/>
            <person name="Chen F."/>
            <person name="Tice H."/>
            <person name="Cheng J.F."/>
            <person name="Saunders E."/>
            <person name="Han C."/>
            <person name="Bruce D."/>
            <person name="Goodwin L."/>
            <person name="Chain P."/>
            <person name="Pitluck S."/>
            <person name="Ovchinikova G."/>
            <person name="Pati A."/>
            <person name="Ivanova N."/>
            <person name="Mavromatis K."/>
            <person name="Chen A."/>
            <person name="Palaniappan K."/>
            <person name="Land M."/>
            <person name="Hauser L."/>
            <person name="Chang Y.J."/>
            <person name="Jeffries C.D."/>
            <person name="Brettin T."/>
            <person name="Goker M."/>
            <person name="Bristow J."/>
            <person name="Eisen J.A."/>
            <person name="Markowitz V."/>
            <person name="Hugenholtz P."/>
            <person name="Kyrpides N.C."/>
            <person name="Klenk H.P."/>
            <person name="Detter J.C."/>
        </authorList>
    </citation>
    <scope>NUCLEOTIDE SEQUENCE [LARGE SCALE GENOMIC DNA]</scope>
    <source>
        <strain>ATCC 43812 / DSM 4252 / R-10</strain>
    </source>
</reference>
<sequence length="697" mass="78338">MSQNERDSLELERKNTPPDGPRLPERRPRFSVWIYLAIFLALLVHFFLFWTGTDTSTIEYSQFLEYVEKGYVERVEIVNDTKVQGRFTEAAVREGLVSVPVRQTDLLRGAQTPELIRRFTTTKPADHDLTSFLLAYNERARAEGRPTVQFTARIEENWFGGLLTWIFPLILIVALWVFLLRRMSPSSQVLNIGKNRAILYDAMGDHRVTFKDVAGLDEAKEEVAEIVEFLKNPKKFTRLGGKLPKGVLLVGPPGTGKTLLAKAVAGEAGVPFFSISGSDFVEMFVGVGAARVRDLFRQAKEKAPCIIFIDEIDAIGRSRGRGIMMGANDERENTLNQLLVEMDGFNTDKGVIIMAATNRPDVLDPALLRPGRFDRQILIDKPDRRERLEIFKVHTRDLILGDDVDLEVLAGQTPGFAGAEIANVCNEAALLAARKGKEAVEMEDFEQAIDRVIAGLEKKNKIISPEEREIVAYHEAGHAIVGWFLRYTDPVVKVSIVPRGLAALGYAQYLPEERYLYTKEALLDRMTMAIGGRVAEELVFGRISTGAQNDLERITRMAYAMVVDYGMSERVGYVSFNLSGQYGEQAFFDKPYSEETARLIDEEVRRIINEVRERARRILEEKRDKLEALARRLLEKEVLGPRDLVEILGPRPYGDYPSPNGKDVEELKDLQKGEPTSSSAVEAPAPQTERPESSSAP</sequence>
<feature type="chain" id="PRO_0000400385" description="ATP-dependent zinc metalloprotease FtsH">
    <location>
        <begin position="1"/>
        <end position="697"/>
    </location>
</feature>
<feature type="topological domain" description="Cytoplasmic" evidence="1">
    <location>
        <begin position="1"/>
        <end position="29"/>
    </location>
</feature>
<feature type="transmembrane region" description="Helical" evidence="1">
    <location>
        <begin position="30"/>
        <end position="50"/>
    </location>
</feature>
<feature type="topological domain" description="Periplasmic" evidence="1">
    <location>
        <begin position="51"/>
        <end position="158"/>
    </location>
</feature>
<feature type="transmembrane region" description="Helical" evidence="1">
    <location>
        <begin position="159"/>
        <end position="179"/>
    </location>
</feature>
<feature type="topological domain" description="Cytoplasmic" evidence="1">
    <location>
        <begin position="180"/>
        <end position="697"/>
    </location>
</feature>
<feature type="region of interest" description="Disordered" evidence="2">
    <location>
        <begin position="1"/>
        <end position="23"/>
    </location>
</feature>
<feature type="region of interest" description="Disordered" evidence="2">
    <location>
        <begin position="649"/>
        <end position="697"/>
    </location>
</feature>
<feature type="compositionally biased region" description="Basic and acidic residues" evidence="2">
    <location>
        <begin position="662"/>
        <end position="672"/>
    </location>
</feature>
<feature type="active site" evidence="1">
    <location>
        <position position="475"/>
    </location>
</feature>
<feature type="binding site" evidence="1">
    <location>
        <begin position="251"/>
        <end position="258"/>
    </location>
    <ligand>
        <name>ATP</name>
        <dbReference type="ChEBI" id="CHEBI:30616"/>
    </ligand>
</feature>
<feature type="binding site" evidence="1">
    <location>
        <position position="474"/>
    </location>
    <ligand>
        <name>Zn(2+)</name>
        <dbReference type="ChEBI" id="CHEBI:29105"/>
        <note>catalytic</note>
    </ligand>
</feature>
<feature type="binding site" evidence="1">
    <location>
        <position position="478"/>
    </location>
    <ligand>
        <name>Zn(2+)</name>
        <dbReference type="ChEBI" id="CHEBI:29105"/>
        <note>catalytic</note>
    </ligand>
</feature>
<feature type="binding site" evidence="1">
    <location>
        <position position="550"/>
    </location>
    <ligand>
        <name>Zn(2+)</name>
        <dbReference type="ChEBI" id="CHEBI:29105"/>
        <note>catalytic</note>
    </ligand>
</feature>
<name>FTSH_RHOM4</name>
<dbReference type="EC" id="3.4.24.-" evidence="1"/>
<dbReference type="EMBL" id="CP001807">
    <property type="protein sequence ID" value="ACY47733.1"/>
    <property type="molecule type" value="Genomic_DNA"/>
</dbReference>
<dbReference type="RefSeq" id="WP_012843345.1">
    <property type="nucleotide sequence ID" value="NC_013501.1"/>
</dbReference>
<dbReference type="SMR" id="D0MGU8"/>
<dbReference type="STRING" id="518766.Rmar_0836"/>
<dbReference type="MEROPS" id="M41.007"/>
<dbReference type="KEGG" id="rmr:Rmar_0836"/>
<dbReference type="eggNOG" id="COG0465">
    <property type="taxonomic scope" value="Bacteria"/>
</dbReference>
<dbReference type="HOGENOM" id="CLU_000688_16_2_10"/>
<dbReference type="OrthoDB" id="9809379at2"/>
<dbReference type="Proteomes" id="UP000002221">
    <property type="component" value="Chromosome"/>
</dbReference>
<dbReference type="GO" id="GO:0005886">
    <property type="term" value="C:plasma membrane"/>
    <property type="evidence" value="ECO:0007669"/>
    <property type="project" value="UniProtKB-SubCell"/>
</dbReference>
<dbReference type="GO" id="GO:0005524">
    <property type="term" value="F:ATP binding"/>
    <property type="evidence" value="ECO:0007669"/>
    <property type="project" value="UniProtKB-UniRule"/>
</dbReference>
<dbReference type="GO" id="GO:0016887">
    <property type="term" value="F:ATP hydrolysis activity"/>
    <property type="evidence" value="ECO:0007669"/>
    <property type="project" value="UniProtKB-UniRule"/>
</dbReference>
<dbReference type="GO" id="GO:0004176">
    <property type="term" value="F:ATP-dependent peptidase activity"/>
    <property type="evidence" value="ECO:0007669"/>
    <property type="project" value="InterPro"/>
</dbReference>
<dbReference type="GO" id="GO:0004222">
    <property type="term" value="F:metalloendopeptidase activity"/>
    <property type="evidence" value="ECO:0007669"/>
    <property type="project" value="InterPro"/>
</dbReference>
<dbReference type="GO" id="GO:0008270">
    <property type="term" value="F:zinc ion binding"/>
    <property type="evidence" value="ECO:0007669"/>
    <property type="project" value="UniProtKB-UniRule"/>
</dbReference>
<dbReference type="GO" id="GO:0030163">
    <property type="term" value="P:protein catabolic process"/>
    <property type="evidence" value="ECO:0007669"/>
    <property type="project" value="UniProtKB-UniRule"/>
</dbReference>
<dbReference type="GO" id="GO:0006508">
    <property type="term" value="P:proteolysis"/>
    <property type="evidence" value="ECO:0007669"/>
    <property type="project" value="UniProtKB-KW"/>
</dbReference>
<dbReference type="CDD" id="cd19501">
    <property type="entry name" value="RecA-like_FtsH"/>
    <property type="match status" value="1"/>
</dbReference>
<dbReference type="FunFam" id="1.20.58.760:FF:000003">
    <property type="entry name" value="AFG3-like AAA ATPase 2"/>
    <property type="match status" value="1"/>
</dbReference>
<dbReference type="FunFam" id="1.10.8.60:FF:000001">
    <property type="entry name" value="ATP-dependent zinc metalloprotease FtsH"/>
    <property type="match status" value="1"/>
</dbReference>
<dbReference type="FunFam" id="3.40.50.300:FF:000001">
    <property type="entry name" value="ATP-dependent zinc metalloprotease FtsH"/>
    <property type="match status" value="1"/>
</dbReference>
<dbReference type="Gene3D" id="1.10.8.60">
    <property type="match status" value="1"/>
</dbReference>
<dbReference type="Gene3D" id="3.30.720.210">
    <property type="match status" value="1"/>
</dbReference>
<dbReference type="Gene3D" id="3.40.50.300">
    <property type="entry name" value="P-loop containing nucleotide triphosphate hydrolases"/>
    <property type="match status" value="1"/>
</dbReference>
<dbReference type="Gene3D" id="1.20.58.760">
    <property type="entry name" value="Peptidase M41"/>
    <property type="match status" value="1"/>
</dbReference>
<dbReference type="HAMAP" id="MF_01458">
    <property type="entry name" value="FtsH"/>
    <property type="match status" value="1"/>
</dbReference>
<dbReference type="InterPro" id="IPR003593">
    <property type="entry name" value="AAA+_ATPase"/>
</dbReference>
<dbReference type="InterPro" id="IPR041569">
    <property type="entry name" value="AAA_lid_3"/>
</dbReference>
<dbReference type="InterPro" id="IPR050928">
    <property type="entry name" value="ATP-dep_Zn_Metalloprotease"/>
</dbReference>
<dbReference type="InterPro" id="IPR003959">
    <property type="entry name" value="ATPase_AAA_core"/>
</dbReference>
<dbReference type="InterPro" id="IPR003960">
    <property type="entry name" value="ATPase_AAA_CS"/>
</dbReference>
<dbReference type="InterPro" id="IPR005936">
    <property type="entry name" value="FtsH"/>
</dbReference>
<dbReference type="InterPro" id="IPR027417">
    <property type="entry name" value="P-loop_NTPase"/>
</dbReference>
<dbReference type="InterPro" id="IPR011546">
    <property type="entry name" value="Pept_M41_FtsH_extracell"/>
</dbReference>
<dbReference type="InterPro" id="IPR000642">
    <property type="entry name" value="Peptidase_M41"/>
</dbReference>
<dbReference type="InterPro" id="IPR037219">
    <property type="entry name" value="Peptidase_M41-like"/>
</dbReference>
<dbReference type="NCBIfam" id="TIGR01241">
    <property type="entry name" value="FtsH_fam"/>
    <property type="match status" value="1"/>
</dbReference>
<dbReference type="PANTHER" id="PTHR43655:SF2">
    <property type="entry name" value="AFG3 LIKE MATRIX AAA PEPTIDASE SUBUNIT 2, ISOFORM A"/>
    <property type="match status" value="1"/>
</dbReference>
<dbReference type="PANTHER" id="PTHR43655">
    <property type="entry name" value="ATP-DEPENDENT PROTEASE"/>
    <property type="match status" value="1"/>
</dbReference>
<dbReference type="Pfam" id="PF00004">
    <property type="entry name" value="AAA"/>
    <property type="match status" value="1"/>
</dbReference>
<dbReference type="Pfam" id="PF17862">
    <property type="entry name" value="AAA_lid_3"/>
    <property type="match status" value="1"/>
</dbReference>
<dbReference type="Pfam" id="PF06480">
    <property type="entry name" value="FtsH_ext"/>
    <property type="match status" value="1"/>
</dbReference>
<dbReference type="Pfam" id="PF01434">
    <property type="entry name" value="Peptidase_M41"/>
    <property type="match status" value="1"/>
</dbReference>
<dbReference type="SMART" id="SM00382">
    <property type="entry name" value="AAA"/>
    <property type="match status" value="1"/>
</dbReference>
<dbReference type="SUPFAM" id="SSF140990">
    <property type="entry name" value="FtsH protease domain-like"/>
    <property type="match status" value="1"/>
</dbReference>
<dbReference type="SUPFAM" id="SSF52540">
    <property type="entry name" value="P-loop containing nucleoside triphosphate hydrolases"/>
    <property type="match status" value="1"/>
</dbReference>
<dbReference type="PROSITE" id="PS00674">
    <property type="entry name" value="AAA"/>
    <property type="match status" value="1"/>
</dbReference>
<keyword id="KW-0067">ATP-binding</keyword>
<keyword id="KW-0997">Cell inner membrane</keyword>
<keyword id="KW-1003">Cell membrane</keyword>
<keyword id="KW-0378">Hydrolase</keyword>
<keyword id="KW-0472">Membrane</keyword>
<keyword id="KW-0479">Metal-binding</keyword>
<keyword id="KW-0482">Metalloprotease</keyword>
<keyword id="KW-0547">Nucleotide-binding</keyword>
<keyword id="KW-0645">Protease</keyword>
<keyword id="KW-1185">Reference proteome</keyword>
<keyword id="KW-0812">Transmembrane</keyword>
<keyword id="KW-1133">Transmembrane helix</keyword>
<keyword id="KW-0862">Zinc</keyword>